<accession>Q85X08</accession>
<dbReference type="EMBL" id="AY228468">
    <property type="protein sequence ID" value="AAO74059.1"/>
    <property type="molecule type" value="Genomic_DNA"/>
</dbReference>
<dbReference type="RefSeq" id="NP_817211.1">
    <property type="nucleotide sequence ID" value="NC_004677.2"/>
</dbReference>
<dbReference type="SMR" id="Q85X08"/>
<dbReference type="GeneID" id="806971"/>
<dbReference type="GO" id="GO:0009535">
    <property type="term" value="C:chloroplast thylakoid membrane"/>
    <property type="evidence" value="ECO:0007669"/>
    <property type="project" value="UniProtKB-SubCell"/>
</dbReference>
<dbReference type="GO" id="GO:0009523">
    <property type="term" value="C:photosystem II"/>
    <property type="evidence" value="ECO:0007669"/>
    <property type="project" value="UniProtKB-KW"/>
</dbReference>
<dbReference type="GO" id="GO:0042301">
    <property type="term" value="F:phosphate ion binding"/>
    <property type="evidence" value="ECO:0007669"/>
    <property type="project" value="InterPro"/>
</dbReference>
<dbReference type="GO" id="GO:0015979">
    <property type="term" value="P:photosynthesis"/>
    <property type="evidence" value="ECO:0007669"/>
    <property type="project" value="UniProtKB-UniRule"/>
</dbReference>
<dbReference type="GO" id="GO:0050821">
    <property type="term" value="P:protein stabilization"/>
    <property type="evidence" value="ECO:0007669"/>
    <property type="project" value="InterPro"/>
</dbReference>
<dbReference type="Gene3D" id="1.20.5.880">
    <property type="entry name" value="Photosystem II reaction center protein H"/>
    <property type="match status" value="1"/>
</dbReference>
<dbReference type="HAMAP" id="MF_00752">
    <property type="entry name" value="PSII_PsbH"/>
    <property type="match status" value="1"/>
</dbReference>
<dbReference type="InterPro" id="IPR001056">
    <property type="entry name" value="PSII_PsbH"/>
</dbReference>
<dbReference type="InterPro" id="IPR036863">
    <property type="entry name" value="PSII_PsbH_sf"/>
</dbReference>
<dbReference type="NCBIfam" id="NF002728">
    <property type="entry name" value="PRK02624.1"/>
    <property type="match status" value="1"/>
</dbReference>
<dbReference type="PANTHER" id="PTHR34469">
    <property type="entry name" value="PHOTOSYSTEM II REACTION CENTER PROTEIN H"/>
    <property type="match status" value="1"/>
</dbReference>
<dbReference type="PANTHER" id="PTHR34469:SF4">
    <property type="entry name" value="PHOTOSYSTEM II REACTION CENTER PROTEIN H"/>
    <property type="match status" value="1"/>
</dbReference>
<dbReference type="Pfam" id="PF00737">
    <property type="entry name" value="PsbH"/>
    <property type="match status" value="1"/>
</dbReference>
<dbReference type="SUPFAM" id="SSF161025">
    <property type="entry name" value="Photosystem II 10 kDa phosphoprotein PsbH"/>
    <property type="match status" value="1"/>
</dbReference>
<comment type="function">
    <text evidence="2">One of the components of the core complex of photosystem II (PSII), required for its stability and/or assembly. PSII is a light-driven water:plastoquinone oxidoreductase that uses light energy to abstract electrons from H(2)O, generating O(2) and a proton gradient subsequently used for ATP formation. It consists of a core antenna complex that captures photons, and an electron transfer chain that converts photonic excitation into a charge separation.</text>
</comment>
<comment type="subunit">
    <text evidence="2">PSII is composed of 1 copy each of membrane proteins PsbA, PsbB, PsbC, PsbD, PsbE, PsbF, PsbH, PsbI, PsbJ, PsbK, PsbL, PsbM, PsbT, PsbX, PsbY, PsbZ, Psb30/Ycf12, at least 3 peripheral proteins of the oxygen-evolving complex and a large number of cofactors. It forms dimeric complexes.</text>
</comment>
<comment type="subcellular location">
    <subcellularLocation>
        <location evidence="2">Plastid</location>
        <location evidence="2">Chloroplast thylakoid membrane</location>
        <topology evidence="2">Single-pass membrane protein</topology>
    </subcellularLocation>
</comment>
<comment type="PTM">
    <text evidence="2">Phosphorylation is a light-dependent reaction catalyzed by a membrane-bound kinase; phosphorylation occurs on Thr residue(s) in the N-terminus of the protein.</text>
</comment>
<comment type="similarity">
    <text evidence="2">Belongs to the PsbH family.</text>
</comment>
<feature type="initiator methionine" description="Removed" evidence="1">
    <location>
        <position position="1"/>
    </location>
</feature>
<feature type="chain" id="PRO_0000070528" description="Photosystem II reaction center protein H">
    <location>
        <begin position="2"/>
        <end position="75"/>
    </location>
</feature>
<feature type="transmembrane region" description="Helical" evidence="2">
    <location>
        <begin position="41"/>
        <end position="61"/>
    </location>
</feature>
<feature type="modified residue" description="Phosphothreonine" evidence="2">
    <location>
        <position position="3"/>
    </location>
</feature>
<feature type="modified residue" description="Phosphothreonine" evidence="2">
    <location>
        <position position="5"/>
    </location>
</feature>
<protein>
    <recommendedName>
        <fullName evidence="2">Photosystem II reaction center protein H</fullName>
        <shortName evidence="2">PSII-H</shortName>
    </recommendedName>
    <alternativeName>
        <fullName evidence="2">Photosystem II 10 kDa phosphoprotein</fullName>
    </alternativeName>
</protein>
<keyword id="KW-0150">Chloroplast</keyword>
<keyword id="KW-0472">Membrane</keyword>
<keyword id="KW-0597">Phosphoprotein</keyword>
<keyword id="KW-0602">Photosynthesis</keyword>
<keyword id="KW-0604">Photosystem II</keyword>
<keyword id="KW-0934">Plastid</keyword>
<keyword id="KW-0793">Thylakoid</keyword>
<keyword id="KW-0812">Transmembrane</keyword>
<keyword id="KW-1133">Transmembrane helix</keyword>
<sequence length="75" mass="8138">MATQTIDDTSKITPRETRVGTSLKPLNSEYGKVAPGWGTTALMGFTMALFAVFLSIILEIYNSSVLLDGIPVSWD</sequence>
<geneLocation type="chloroplast"/>
<gene>
    <name evidence="2" type="primary">psbH</name>
</gene>
<reference key="1">
    <citation type="submission" date="2003-02" db="EMBL/GenBank/DDBJ databases">
        <title>Complete nucleotide sequence of Pinus koraiensis.</title>
        <authorList>
            <person name="Noh E.W."/>
            <person name="Lee J.S."/>
            <person name="Choi Y.I."/>
            <person name="Han M.S."/>
            <person name="Yi Y.S."/>
            <person name="Han S.U."/>
        </authorList>
    </citation>
    <scope>NUCLEOTIDE SEQUENCE [LARGE SCALE GENOMIC DNA]</scope>
    <source>
        <strain>KangWon16</strain>
    </source>
</reference>
<evidence type="ECO:0000250" key="1">
    <source>
        <dbReference type="UniProtKB" id="P56780"/>
    </source>
</evidence>
<evidence type="ECO:0000255" key="2">
    <source>
        <dbReference type="HAMAP-Rule" id="MF_00752"/>
    </source>
</evidence>
<name>PSBH_PINKO</name>
<organism>
    <name type="scientific">Pinus koraiensis</name>
    <name type="common">Korean pine</name>
    <dbReference type="NCBI Taxonomy" id="88728"/>
    <lineage>
        <taxon>Eukaryota</taxon>
        <taxon>Viridiplantae</taxon>
        <taxon>Streptophyta</taxon>
        <taxon>Embryophyta</taxon>
        <taxon>Tracheophyta</taxon>
        <taxon>Spermatophyta</taxon>
        <taxon>Pinopsida</taxon>
        <taxon>Pinidae</taxon>
        <taxon>Conifers I</taxon>
        <taxon>Pinales</taxon>
        <taxon>Pinaceae</taxon>
        <taxon>Pinus</taxon>
        <taxon>Pinus subgen. Strobus</taxon>
    </lineage>
</organism>
<proteinExistence type="inferred from homology"/>